<feature type="chain" id="PRO_0000221409" description="Ribosome-inactivating protein TAP-29">
    <location>
        <begin position="1"/>
        <end position="45" status="greater than"/>
    </location>
</feature>
<feature type="non-terminal residue">
    <location>
        <position position="45"/>
    </location>
</feature>
<evidence type="ECO:0000305" key="1"/>
<reference key="1">
    <citation type="journal article" date="1991" name="Proc. Natl. Acad. Sci. U.S.A.">
        <title>TAP 29: an anti-human immunodeficiency virus protein from Trichosanthes kirilowii that is nontoxic to intact cells.</title>
        <authorList>
            <person name="Lee-Huang S."/>
            <person name="Huang P.L."/>
            <person name="Kung H.-F."/>
            <person name="Li B.-Q."/>
            <person name="Huang P.L."/>
            <person name="Huang P."/>
            <person name="Huang H.I."/>
            <person name="Chen H.-C."/>
        </authorList>
    </citation>
    <scope>PROTEIN SEQUENCE</scope>
    <source>
        <tissue>Tuberous root</tissue>
    </source>
</reference>
<keyword id="KW-0903">Direct protein sequencing</keyword>
<keyword id="KW-0378">Hydrolase</keyword>
<keyword id="KW-0611">Plant defense</keyword>
<keyword id="KW-0652">Protein synthesis inhibitor</keyword>
<keyword id="KW-0800">Toxin</keyword>
<accession>P23029</accession>
<comment type="function">
    <text>Capable of inhibiting HIV-1 infection and replication. It inactivates eukaryotic 60S ribosomal subunits.</text>
</comment>
<comment type="catalytic activity">
    <reaction>
        <text>Endohydrolysis of the N-glycosidic bond at one specific adenosine on the 28S rRNA.</text>
        <dbReference type="EC" id="3.2.2.22"/>
    </reaction>
</comment>
<comment type="similarity">
    <text evidence="1">Belongs to the ribosome-inactivating protein family. Type 1 RIP subfamily.</text>
</comment>
<sequence>DVSFRLSGATSKKKVYFISNLRKALPNEKKLYDIPLVRSSXSGSK</sequence>
<name>RIP2_TRIKI</name>
<dbReference type="EC" id="3.2.2.22"/>
<dbReference type="PIR" id="A39598">
    <property type="entry name" value="A39598"/>
</dbReference>
<dbReference type="GO" id="GO:0030598">
    <property type="term" value="F:rRNA N-glycosylase activity"/>
    <property type="evidence" value="ECO:0007669"/>
    <property type="project" value="UniProtKB-EC"/>
</dbReference>
<dbReference type="GO" id="GO:0090729">
    <property type="term" value="F:toxin activity"/>
    <property type="evidence" value="ECO:0007669"/>
    <property type="project" value="UniProtKB-KW"/>
</dbReference>
<dbReference type="GO" id="GO:0006952">
    <property type="term" value="P:defense response"/>
    <property type="evidence" value="ECO:0007669"/>
    <property type="project" value="UniProtKB-KW"/>
</dbReference>
<dbReference type="GO" id="GO:0017148">
    <property type="term" value="P:negative regulation of translation"/>
    <property type="evidence" value="ECO:0007669"/>
    <property type="project" value="UniProtKB-KW"/>
</dbReference>
<dbReference type="InterPro" id="IPR036041">
    <property type="entry name" value="Ribosome-inact_prot_sf"/>
</dbReference>
<dbReference type="SUPFAM" id="SSF56371">
    <property type="entry name" value="Ribosome inactivating proteins (RIP)"/>
    <property type="match status" value="1"/>
</dbReference>
<proteinExistence type="evidence at protein level"/>
<protein>
    <recommendedName>
        <fullName>Ribosome-inactivating protein TAP-29</fullName>
        <ecNumber>3.2.2.22</ecNumber>
    </recommendedName>
    <alternativeName>
        <fullName>rRNA N-glycosidase</fullName>
    </alternativeName>
</protein>
<organism>
    <name type="scientific">Trichosanthes kirilowii</name>
    <name type="common">Chinese snake gourd</name>
    <name type="synonym">Chinese cucumber</name>
    <dbReference type="NCBI Taxonomy" id="3677"/>
    <lineage>
        <taxon>Eukaryota</taxon>
        <taxon>Viridiplantae</taxon>
        <taxon>Streptophyta</taxon>
        <taxon>Embryophyta</taxon>
        <taxon>Tracheophyta</taxon>
        <taxon>Spermatophyta</taxon>
        <taxon>Magnoliopsida</taxon>
        <taxon>eudicotyledons</taxon>
        <taxon>Gunneridae</taxon>
        <taxon>Pentapetalae</taxon>
        <taxon>rosids</taxon>
        <taxon>fabids</taxon>
        <taxon>Cucurbitales</taxon>
        <taxon>Cucurbitaceae</taxon>
        <taxon>Sicyoeae</taxon>
        <taxon>Trichosanthes</taxon>
    </lineage>
</organism>